<gene>
    <name type="ORF">SPAC17C9.06</name>
</gene>
<protein>
    <recommendedName>
        <fullName>SAM50-like protein SPAC17C9.06</fullName>
    </recommendedName>
</protein>
<keyword id="KW-0472">Membrane</keyword>
<keyword id="KW-0496">Mitochondrion</keyword>
<keyword id="KW-1000">Mitochondrion outer membrane</keyword>
<keyword id="KW-1185">Reference proteome</keyword>
<keyword id="KW-0812">Transmembrane</keyword>
<keyword id="KW-1134">Transmembrane beta strand</keyword>
<sequence>MTEQFESTSFPSDIPAVNEESKLSAEETFKSLSEILAENSTLPVGISSIRVTGAHHTRPSFIRKVLKTCLDTSKPAKSRSLLETLNAIQETTGNLMAFNVYETANIKIDRASSSVSGDDDLDVTIQVKEKPRLYVETGTDVGNVEGNVHANVLARNVFGGAELLSGNVSYGTRNRSTMSVNFETPVNADPKTRLRFNGHSNLRDNKSISSHDLLTKGITLSLQHQDLWSGEHLLSQNLLWRQVTHLTEYASPSVRLEAGDSLKQSLSYTYTRDTRDHLMIPTKGDYVRQTLELAGFGFLPGDASFLKSEFWGQKAVALNSSRSVSLSLSARIGALHSLNKKQVSLCDRFMLGGSTSLRGFSEDRIGPKDGRDSLGGTAYMAFSMSLLFPLPKVDASKPFRLQLFANAGGLSNLTSPNPCGTYKSILSKPCISTGLGLVYATPAARFELNFTLPIATTEKDIGRKGLQFGAGIDFM</sequence>
<name>SAM50_SCHPO</name>
<accession>Q10478</accession>
<reference key="1">
    <citation type="journal article" date="2002" name="Nature">
        <title>The genome sequence of Schizosaccharomyces pombe.</title>
        <authorList>
            <person name="Wood V."/>
            <person name="Gwilliam R."/>
            <person name="Rajandream M.A."/>
            <person name="Lyne M.H."/>
            <person name="Lyne R."/>
            <person name="Stewart A."/>
            <person name="Sgouros J.G."/>
            <person name="Peat N."/>
            <person name="Hayles J."/>
            <person name="Baker S.G."/>
            <person name="Basham D."/>
            <person name="Bowman S."/>
            <person name="Brooks K."/>
            <person name="Brown D."/>
            <person name="Brown S."/>
            <person name="Chillingworth T."/>
            <person name="Churcher C.M."/>
            <person name="Collins M."/>
            <person name="Connor R."/>
            <person name="Cronin A."/>
            <person name="Davis P."/>
            <person name="Feltwell T."/>
            <person name="Fraser A."/>
            <person name="Gentles S."/>
            <person name="Goble A."/>
            <person name="Hamlin N."/>
            <person name="Harris D.E."/>
            <person name="Hidalgo J."/>
            <person name="Hodgson G."/>
            <person name="Holroyd S."/>
            <person name="Hornsby T."/>
            <person name="Howarth S."/>
            <person name="Huckle E.J."/>
            <person name="Hunt S."/>
            <person name="Jagels K."/>
            <person name="James K.D."/>
            <person name="Jones L."/>
            <person name="Jones M."/>
            <person name="Leather S."/>
            <person name="McDonald S."/>
            <person name="McLean J."/>
            <person name="Mooney P."/>
            <person name="Moule S."/>
            <person name="Mungall K.L."/>
            <person name="Murphy L.D."/>
            <person name="Niblett D."/>
            <person name="Odell C."/>
            <person name="Oliver K."/>
            <person name="O'Neil S."/>
            <person name="Pearson D."/>
            <person name="Quail M.A."/>
            <person name="Rabbinowitsch E."/>
            <person name="Rutherford K.M."/>
            <person name="Rutter S."/>
            <person name="Saunders D."/>
            <person name="Seeger K."/>
            <person name="Sharp S."/>
            <person name="Skelton J."/>
            <person name="Simmonds M.N."/>
            <person name="Squares R."/>
            <person name="Squares S."/>
            <person name="Stevens K."/>
            <person name="Taylor K."/>
            <person name="Taylor R.G."/>
            <person name="Tivey A."/>
            <person name="Walsh S.V."/>
            <person name="Warren T."/>
            <person name="Whitehead S."/>
            <person name="Woodward J.R."/>
            <person name="Volckaert G."/>
            <person name="Aert R."/>
            <person name="Robben J."/>
            <person name="Grymonprez B."/>
            <person name="Weltjens I."/>
            <person name="Vanstreels E."/>
            <person name="Rieger M."/>
            <person name="Schaefer M."/>
            <person name="Mueller-Auer S."/>
            <person name="Gabel C."/>
            <person name="Fuchs M."/>
            <person name="Duesterhoeft A."/>
            <person name="Fritzc C."/>
            <person name="Holzer E."/>
            <person name="Moestl D."/>
            <person name="Hilbert H."/>
            <person name="Borzym K."/>
            <person name="Langer I."/>
            <person name="Beck A."/>
            <person name="Lehrach H."/>
            <person name="Reinhardt R."/>
            <person name="Pohl T.M."/>
            <person name="Eger P."/>
            <person name="Zimmermann W."/>
            <person name="Wedler H."/>
            <person name="Wambutt R."/>
            <person name="Purnelle B."/>
            <person name="Goffeau A."/>
            <person name="Cadieu E."/>
            <person name="Dreano S."/>
            <person name="Gloux S."/>
            <person name="Lelaure V."/>
            <person name="Mottier S."/>
            <person name="Galibert F."/>
            <person name="Aves S.J."/>
            <person name="Xiang Z."/>
            <person name="Hunt C."/>
            <person name="Moore K."/>
            <person name="Hurst S.M."/>
            <person name="Lucas M."/>
            <person name="Rochet M."/>
            <person name="Gaillardin C."/>
            <person name="Tallada V.A."/>
            <person name="Garzon A."/>
            <person name="Thode G."/>
            <person name="Daga R.R."/>
            <person name="Cruzado L."/>
            <person name="Jimenez J."/>
            <person name="Sanchez M."/>
            <person name="del Rey F."/>
            <person name="Benito J."/>
            <person name="Dominguez A."/>
            <person name="Revuelta J.L."/>
            <person name="Moreno S."/>
            <person name="Armstrong J."/>
            <person name="Forsburg S.L."/>
            <person name="Cerutti L."/>
            <person name="Lowe T."/>
            <person name="McCombie W.R."/>
            <person name="Paulsen I."/>
            <person name="Potashkin J."/>
            <person name="Shpakovski G.V."/>
            <person name="Ussery D."/>
            <person name="Barrell B.G."/>
            <person name="Nurse P."/>
        </authorList>
    </citation>
    <scope>NUCLEOTIDE SEQUENCE [LARGE SCALE GENOMIC DNA]</scope>
    <source>
        <strain>972 / ATCC 24843</strain>
    </source>
</reference>
<comment type="function">
    <text evidence="1">May be required for the assembly pathway of mitochondrial outer membrane proteins.</text>
</comment>
<comment type="subunit">
    <text evidence="1">Associates with the mitochondrial contact site and cristae organizing system (MICOS) complex (also known as MINOS or MitOS complex).</text>
</comment>
<comment type="subcellular location">
    <subcellularLocation>
        <location evidence="2">Mitochondrion outer membrane</location>
        <topology evidence="1">Multi-pass membrane protein</topology>
    </subcellularLocation>
</comment>
<comment type="domain">
    <text evidence="1">Its C-terminal part seems to contain many membrane-spanning sided beta-sheets, that have the potential to adopt a transmembrane beta-barrel type structure.</text>
</comment>
<comment type="similarity">
    <text evidence="4">Belongs to the SAM50/omp85 family.</text>
</comment>
<feature type="chain" id="PRO_0000215942" description="SAM50-like protein SPAC17C9.06">
    <location>
        <begin position="1"/>
        <end position="475"/>
    </location>
</feature>
<feature type="domain" description="POTRA" evidence="3">
    <location>
        <begin position="44"/>
        <end position="130"/>
    </location>
</feature>
<proteinExistence type="inferred from homology"/>
<organism>
    <name type="scientific">Schizosaccharomyces pombe (strain 972 / ATCC 24843)</name>
    <name type="common">Fission yeast</name>
    <dbReference type="NCBI Taxonomy" id="284812"/>
    <lineage>
        <taxon>Eukaryota</taxon>
        <taxon>Fungi</taxon>
        <taxon>Dikarya</taxon>
        <taxon>Ascomycota</taxon>
        <taxon>Taphrinomycotina</taxon>
        <taxon>Schizosaccharomycetes</taxon>
        <taxon>Schizosaccharomycetales</taxon>
        <taxon>Schizosaccharomycetaceae</taxon>
        <taxon>Schizosaccharomyces</taxon>
    </lineage>
</organism>
<evidence type="ECO:0000250" key="1"/>
<evidence type="ECO:0000250" key="2">
    <source>
        <dbReference type="UniProtKB" id="P53969"/>
    </source>
</evidence>
<evidence type="ECO:0000255" key="3">
    <source>
        <dbReference type="PROSITE-ProRule" id="PRU01115"/>
    </source>
</evidence>
<evidence type="ECO:0000305" key="4"/>
<dbReference type="EMBL" id="CU329670">
    <property type="protein sequence ID" value="CAA97352.1"/>
    <property type="molecule type" value="Genomic_DNA"/>
</dbReference>
<dbReference type="PIR" id="T11586">
    <property type="entry name" value="T11586"/>
</dbReference>
<dbReference type="SMR" id="Q10478"/>
<dbReference type="BioGRID" id="278903">
    <property type="interactions" value="2"/>
</dbReference>
<dbReference type="FunCoup" id="Q10478">
    <property type="interactions" value="467"/>
</dbReference>
<dbReference type="STRING" id="284812.Q10478"/>
<dbReference type="TCDB" id="1.B.33.3.2">
    <property type="family name" value="the outer membrane protein insertion porin (bam complex) (ompip) family"/>
</dbReference>
<dbReference type="iPTMnet" id="Q10478"/>
<dbReference type="PaxDb" id="4896-SPAC17C9.06.1"/>
<dbReference type="EnsemblFungi" id="SPAC17C9.06.1">
    <property type="protein sequence ID" value="SPAC17C9.06.1:pep"/>
    <property type="gene ID" value="SPAC17C9.06"/>
</dbReference>
<dbReference type="KEGG" id="spo:2542441"/>
<dbReference type="PomBase" id="SPAC17C9.06"/>
<dbReference type="VEuPathDB" id="FungiDB:SPAC17C9.06"/>
<dbReference type="eggNOG" id="KOG2602">
    <property type="taxonomic scope" value="Eukaryota"/>
</dbReference>
<dbReference type="HOGENOM" id="CLU_014798_3_1_1"/>
<dbReference type="InParanoid" id="Q10478"/>
<dbReference type="OMA" id="KHPVARF"/>
<dbReference type="PhylomeDB" id="Q10478"/>
<dbReference type="PRO" id="PR:Q10478"/>
<dbReference type="Proteomes" id="UP000002485">
    <property type="component" value="Chromosome I"/>
</dbReference>
<dbReference type="GO" id="GO:0005739">
    <property type="term" value="C:mitochondrion"/>
    <property type="evidence" value="ECO:0007005"/>
    <property type="project" value="PomBase"/>
</dbReference>
<dbReference type="GO" id="GO:0001401">
    <property type="term" value="C:SAM complex"/>
    <property type="evidence" value="ECO:0000266"/>
    <property type="project" value="PomBase"/>
</dbReference>
<dbReference type="GO" id="GO:0045040">
    <property type="term" value="P:protein insertion into mitochondrial outer membrane"/>
    <property type="evidence" value="ECO:0000318"/>
    <property type="project" value="GO_Central"/>
</dbReference>
<dbReference type="Gene3D" id="3.10.20.310">
    <property type="entry name" value="membrane protein fhac"/>
    <property type="match status" value="1"/>
</dbReference>
<dbReference type="Gene3D" id="2.40.160.50">
    <property type="entry name" value="membrane protein fhac: a member of the omp85/tpsb transporter family"/>
    <property type="match status" value="1"/>
</dbReference>
<dbReference type="InterPro" id="IPR000184">
    <property type="entry name" value="Bac_surfAg_D15"/>
</dbReference>
<dbReference type="InterPro" id="IPR039910">
    <property type="entry name" value="D15-like"/>
</dbReference>
<dbReference type="InterPro" id="IPR034746">
    <property type="entry name" value="POTRA"/>
</dbReference>
<dbReference type="PANTHER" id="PTHR12815:SF18">
    <property type="entry name" value="SORTING AND ASSEMBLY MACHINERY COMPONENT 50 HOMOLOG"/>
    <property type="match status" value="1"/>
</dbReference>
<dbReference type="PANTHER" id="PTHR12815">
    <property type="entry name" value="SORTING AND ASSEMBLY MACHINERY SAMM50 PROTEIN FAMILY MEMBER"/>
    <property type="match status" value="1"/>
</dbReference>
<dbReference type="Pfam" id="PF01103">
    <property type="entry name" value="Omp85"/>
    <property type="match status" value="1"/>
</dbReference>
<dbReference type="PROSITE" id="PS51779">
    <property type="entry name" value="POTRA"/>
    <property type="match status" value="1"/>
</dbReference>